<gene>
    <name type="primary">alr</name>
    <name type="ordered locus">SAK_1696</name>
</gene>
<keyword id="KW-0413">Isomerase</keyword>
<keyword id="KW-0663">Pyridoxal phosphate</keyword>
<protein>
    <recommendedName>
        <fullName evidence="1">Alanine racemase</fullName>
        <ecNumber evidence="1">5.1.1.1</ecNumber>
    </recommendedName>
</protein>
<feature type="chain" id="PRO_1000066041" description="Alanine racemase">
    <location>
        <begin position="1"/>
        <end position="366"/>
    </location>
</feature>
<feature type="active site" description="Proton acceptor; specific for D-alanine" evidence="1">
    <location>
        <position position="40"/>
    </location>
</feature>
<feature type="active site" description="Proton acceptor; specific for L-alanine" evidence="1">
    <location>
        <position position="263"/>
    </location>
</feature>
<feature type="binding site" evidence="1">
    <location>
        <position position="136"/>
    </location>
    <ligand>
        <name>substrate</name>
    </ligand>
</feature>
<feature type="binding site" evidence="1">
    <location>
        <position position="310"/>
    </location>
    <ligand>
        <name>substrate</name>
    </ligand>
</feature>
<feature type="modified residue" description="N6-(pyridoxal phosphate)lysine" evidence="1">
    <location>
        <position position="40"/>
    </location>
</feature>
<sequence>MISSYHRPTRALIDLEAIANNVKSVQEHIPSDKKTFAVVKANAYGHGAVEVSKYIESIVDGFCVSNLDEAIELRQAGIVKMILVLGVVMPEQVILAKNENITLTVASLEWLRLCQTSAVDLSGLEVHIKVDSGMGRIGVRQLDEGNKLISELGESGASVKGIFTHFATADEADNCKFNQQLTFFKDFISGLDNCPDLVHASNSATSLWHSETIFNAVRLGVVMYGLNPSGTDLDLPYPINPALSLESELVHVKQLHDGSQVGYGATYQVTGDEFVGTVPIGYADGWTRDMQGFSVIVNGELCEIIGRVSMDQMTIRLPQKYTIGTKVTLIGQQGSCNITTTDVAQKRQTINYEVLCLLSDRIPRYY</sequence>
<accession>Q3JZK5</accession>
<reference key="1">
    <citation type="journal article" date="2005" name="Proc. Natl. Acad. Sci. U.S.A.">
        <title>Genome analysis of multiple pathogenic isolates of Streptococcus agalactiae: implications for the microbial 'pan-genome'.</title>
        <authorList>
            <person name="Tettelin H."/>
            <person name="Masignani V."/>
            <person name="Cieslewicz M.J."/>
            <person name="Donati C."/>
            <person name="Medini D."/>
            <person name="Ward N.L."/>
            <person name="Angiuoli S.V."/>
            <person name="Crabtree J."/>
            <person name="Jones A.L."/>
            <person name="Durkin A.S."/>
            <person name="DeBoy R.T."/>
            <person name="Davidsen T.M."/>
            <person name="Mora M."/>
            <person name="Scarselli M."/>
            <person name="Margarit y Ros I."/>
            <person name="Peterson J.D."/>
            <person name="Hauser C.R."/>
            <person name="Sundaram J.P."/>
            <person name="Nelson W.C."/>
            <person name="Madupu R."/>
            <person name="Brinkac L.M."/>
            <person name="Dodson R.J."/>
            <person name="Rosovitz M.J."/>
            <person name="Sullivan S.A."/>
            <person name="Daugherty S.C."/>
            <person name="Haft D.H."/>
            <person name="Selengut J."/>
            <person name="Gwinn M.L."/>
            <person name="Zhou L."/>
            <person name="Zafar N."/>
            <person name="Khouri H."/>
            <person name="Radune D."/>
            <person name="Dimitrov G."/>
            <person name="Watkins K."/>
            <person name="O'Connor K.J."/>
            <person name="Smith S."/>
            <person name="Utterback T.R."/>
            <person name="White O."/>
            <person name="Rubens C.E."/>
            <person name="Grandi G."/>
            <person name="Madoff L.C."/>
            <person name="Kasper D.L."/>
            <person name="Telford J.L."/>
            <person name="Wessels M.R."/>
            <person name="Rappuoli R."/>
            <person name="Fraser C.M."/>
        </authorList>
    </citation>
    <scope>NUCLEOTIDE SEQUENCE [LARGE SCALE GENOMIC DNA]</scope>
    <source>
        <strain>ATCC 27591 / A909 / CDC SS700</strain>
    </source>
</reference>
<organism>
    <name type="scientific">Streptococcus agalactiae serotype Ia (strain ATCC 27591 / A909 / CDC SS700)</name>
    <dbReference type="NCBI Taxonomy" id="205921"/>
    <lineage>
        <taxon>Bacteria</taxon>
        <taxon>Bacillati</taxon>
        <taxon>Bacillota</taxon>
        <taxon>Bacilli</taxon>
        <taxon>Lactobacillales</taxon>
        <taxon>Streptococcaceae</taxon>
        <taxon>Streptococcus</taxon>
    </lineage>
</organism>
<evidence type="ECO:0000255" key="1">
    <source>
        <dbReference type="HAMAP-Rule" id="MF_01201"/>
    </source>
</evidence>
<proteinExistence type="inferred from homology"/>
<dbReference type="EC" id="5.1.1.1" evidence="1"/>
<dbReference type="EMBL" id="CP000114">
    <property type="protein sequence ID" value="ABA45793.1"/>
    <property type="molecule type" value="Genomic_DNA"/>
</dbReference>
<dbReference type="RefSeq" id="WP_000625941.1">
    <property type="nucleotide sequence ID" value="NC_007432.1"/>
</dbReference>
<dbReference type="SMR" id="Q3JZK5"/>
<dbReference type="KEGG" id="sak:SAK_1696"/>
<dbReference type="HOGENOM" id="CLU_028393_2_1_9"/>
<dbReference type="UniPathway" id="UPA00042">
    <property type="reaction ID" value="UER00497"/>
</dbReference>
<dbReference type="GO" id="GO:0005829">
    <property type="term" value="C:cytosol"/>
    <property type="evidence" value="ECO:0007669"/>
    <property type="project" value="TreeGrafter"/>
</dbReference>
<dbReference type="GO" id="GO:0008784">
    <property type="term" value="F:alanine racemase activity"/>
    <property type="evidence" value="ECO:0007669"/>
    <property type="project" value="UniProtKB-UniRule"/>
</dbReference>
<dbReference type="GO" id="GO:0030170">
    <property type="term" value="F:pyridoxal phosphate binding"/>
    <property type="evidence" value="ECO:0007669"/>
    <property type="project" value="UniProtKB-UniRule"/>
</dbReference>
<dbReference type="GO" id="GO:0030632">
    <property type="term" value="P:D-alanine biosynthetic process"/>
    <property type="evidence" value="ECO:0007669"/>
    <property type="project" value="UniProtKB-UniRule"/>
</dbReference>
<dbReference type="GO" id="GO:0009252">
    <property type="term" value="P:peptidoglycan biosynthetic process"/>
    <property type="evidence" value="ECO:0007669"/>
    <property type="project" value="TreeGrafter"/>
</dbReference>
<dbReference type="CDD" id="cd00430">
    <property type="entry name" value="PLPDE_III_AR"/>
    <property type="match status" value="1"/>
</dbReference>
<dbReference type="FunFam" id="2.40.37.10:FF:000006">
    <property type="entry name" value="Alanine racemase"/>
    <property type="match status" value="1"/>
</dbReference>
<dbReference type="FunFam" id="3.20.20.10:FF:000002">
    <property type="entry name" value="Alanine racemase"/>
    <property type="match status" value="1"/>
</dbReference>
<dbReference type="Gene3D" id="3.20.20.10">
    <property type="entry name" value="Alanine racemase"/>
    <property type="match status" value="1"/>
</dbReference>
<dbReference type="Gene3D" id="2.40.37.10">
    <property type="entry name" value="Lyase, Ornithine Decarboxylase, Chain A, domain 1"/>
    <property type="match status" value="1"/>
</dbReference>
<dbReference type="HAMAP" id="MF_01201">
    <property type="entry name" value="Ala_racemase"/>
    <property type="match status" value="1"/>
</dbReference>
<dbReference type="InterPro" id="IPR000821">
    <property type="entry name" value="Ala_racemase"/>
</dbReference>
<dbReference type="InterPro" id="IPR009006">
    <property type="entry name" value="Ala_racemase/Decarboxylase_C"/>
</dbReference>
<dbReference type="InterPro" id="IPR011079">
    <property type="entry name" value="Ala_racemase_C"/>
</dbReference>
<dbReference type="InterPro" id="IPR001608">
    <property type="entry name" value="Ala_racemase_N"/>
</dbReference>
<dbReference type="InterPro" id="IPR020622">
    <property type="entry name" value="Ala_racemase_pyridoxalP-BS"/>
</dbReference>
<dbReference type="InterPro" id="IPR029066">
    <property type="entry name" value="PLP-binding_barrel"/>
</dbReference>
<dbReference type="NCBIfam" id="TIGR00492">
    <property type="entry name" value="alr"/>
    <property type="match status" value="1"/>
</dbReference>
<dbReference type="PANTHER" id="PTHR30511">
    <property type="entry name" value="ALANINE RACEMASE"/>
    <property type="match status" value="1"/>
</dbReference>
<dbReference type="PANTHER" id="PTHR30511:SF0">
    <property type="entry name" value="ALANINE RACEMASE, CATABOLIC-RELATED"/>
    <property type="match status" value="1"/>
</dbReference>
<dbReference type="Pfam" id="PF00842">
    <property type="entry name" value="Ala_racemase_C"/>
    <property type="match status" value="1"/>
</dbReference>
<dbReference type="Pfam" id="PF01168">
    <property type="entry name" value="Ala_racemase_N"/>
    <property type="match status" value="1"/>
</dbReference>
<dbReference type="PRINTS" id="PR00992">
    <property type="entry name" value="ALARACEMASE"/>
</dbReference>
<dbReference type="SMART" id="SM01005">
    <property type="entry name" value="Ala_racemase_C"/>
    <property type="match status" value="1"/>
</dbReference>
<dbReference type="SUPFAM" id="SSF50621">
    <property type="entry name" value="Alanine racemase C-terminal domain-like"/>
    <property type="match status" value="1"/>
</dbReference>
<dbReference type="SUPFAM" id="SSF51419">
    <property type="entry name" value="PLP-binding barrel"/>
    <property type="match status" value="1"/>
</dbReference>
<dbReference type="PROSITE" id="PS00395">
    <property type="entry name" value="ALANINE_RACEMASE"/>
    <property type="match status" value="1"/>
</dbReference>
<comment type="function">
    <text evidence="1">Catalyzes the interconversion of L-alanine and D-alanine. May also act on other amino acids.</text>
</comment>
<comment type="catalytic activity">
    <reaction evidence="1">
        <text>L-alanine = D-alanine</text>
        <dbReference type="Rhea" id="RHEA:20249"/>
        <dbReference type="ChEBI" id="CHEBI:57416"/>
        <dbReference type="ChEBI" id="CHEBI:57972"/>
        <dbReference type="EC" id="5.1.1.1"/>
    </reaction>
</comment>
<comment type="cofactor">
    <cofactor evidence="1">
        <name>pyridoxal 5'-phosphate</name>
        <dbReference type="ChEBI" id="CHEBI:597326"/>
    </cofactor>
</comment>
<comment type="pathway">
    <text evidence="1">Amino-acid biosynthesis; D-alanine biosynthesis; D-alanine from L-alanine: step 1/1.</text>
</comment>
<comment type="similarity">
    <text evidence="1">Belongs to the alanine racemase family.</text>
</comment>
<name>ALR_STRA1</name>